<evidence type="ECO:0000250" key="1"/>
<evidence type="ECO:0000255" key="2">
    <source>
        <dbReference type="PROSITE-ProRule" id="PRU00192"/>
    </source>
</evidence>
<evidence type="ECO:0000256" key="3">
    <source>
        <dbReference type="SAM" id="MobiDB-lite"/>
    </source>
</evidence>
<evidence type="ECO:0000305" key="4"/>
<gene>
    <name type="primary">SLA1</name>
    <name type="ORF">UMAG_05337</name>
</gene>
<sequence>MAYVALCKALYDYVAQAEDELNLTEDDHLYILESDDPEWWKAKLRRLDEHGTPIQDDSDDSTVGLVPANYVEEAEPIRLSRALYDYEAQTEEELSMAEDELLRVYESDGVWLLVKKQGNDPLSGGEGRLGYVPANYVDEAEAVDTGAAPAVEDEYTAADEDDEDDDDTDVTGSGAPIPQIHLPQTAQLGKGDNIKMWPVSALDSKKKKKKGTLGIGNASLFFASESDKTPVKKISILHIASHSLEKGKTLHLQLSPEAGLSESTLDFHAGSKDAANDIIRKIEVSKANALTAAAAPVPVPVPAPAPPAAAAAAASAAVPLPPPPPPAPPVASAAALPPPTRTTSATLPPPVRKNVSFQSQPAAEPEEAVEHGVAMYDFEAQGDDELTVTENEHLIILEKENDDWWKVRNDAGQEGVVPASYVEATDASAAAGASSGATAAAALAAQQEEEERLRREEEEAATVAEAERQREAVDRQREARERGEREEKERARREALKAQPVPAPPKLTQRPSTTDVSRAAKNVAIPQGRSAPERPKDGGSRSKPSPTNTRMWTDRTGAFKVEAEFLGFNQGKIRLHKMNGVVIEVAIEKMSNGDIAFLEDITGKKLNPTDEEIAASAARRRERERERQSSRPQSSAVAGMPREDRERERERRKEKEREQRRRESARSGPKRNVDWFEFFLAAGVDVDDCTRYASSFERDKIDETVLADLDPSTLRSIGLREGDIIRVTKFIDKKYRRDKSHSSLSSSRASGRANANTAADLERQIKADEELARKLQEQESSARRGDSVSPAPPQLFSGPDGTLKNNTRRGRPTPKSTSSSNVDAASLAAASESLARTATPPARTATASPAVAPKRTGSSLANGFDDDAWTPRPPSTKPTTPARPTVASPAPSTPAAPAAPPAPTPPPAAVAVASSAPPADPNSALFEKLAAMKAPSASVSPRPGVSPSPGSSFLGQSQMYNPNAPRGPFAPVPANQGLLQPLVPTQGTGQFVPTKTGMMGMQMTGMQPQLTGWGMQGMQGMQPQMTGFNNSMGSMSVMGGMGMQPQATGFGNGNGYGMNGSSPFTGGQISTQQTGLVGMGMQPQATGFNNFGQNAQQMMTQQTGFGMGSQQQGQQLQAEQDEKEKFKASNIFQQMKTGAFAKDPNAAPQSSEKYDALRPQPTGFQPGGVMPQFTGMGFGQSAQQQQQQQQQQYPYNNAYGGGFGGGF</sequence>
<feature type="chain" id="PRO_0000349490" description="Actin cytoskeleton-regulatory complex protein SLA1">
    <location>
        <begin position="1"/>
        <end position="1207"/>
    </location>
</feature>
<feature type="domain" description="SH3 1" evidence="2">
    <location>
        <begin position="2"/>
        <end position="76"/>
    </location>
</feature>
<feature type="domain" description="SH3 2" evidence="2">
    <location>
        <begin position="77"/>
        <end position="142"/>
    </location>
</feature>
<feature type="domain" description="SH3 3" evidence="2">
    <location>
        <begin position="367"/>
        <end position="427"/>
    </location>
</feature>
<feature type="region of interest" description="Disordered" evidence="3">
    <location>
        <begin position="143"/>
        <end position="185"/>
    </location>
</feature>
<feature type="region of interest" description="Disordered" evidence="3">
    <location>
        <begin position="325"/>
        <end position="367"/>
    </location>
</feature>
<feature type="region of interest" description="Disordered" evidence="3">
    <location>
        <begin position="448"/>
        <end position="553"/>
    </location>
</feature>
<feature type="region of interest" description="Disordered" evidence="3">
    <location>
        <begin position="609"/>
        <end position="667"/>
    </location>
</feature>
<feature type="region of interest" description="Disordered" evidence="3">
    <location>
        <begin position="736"/>
        <end position="757"/>
    </location>
</feature>
<feature type="region of interest" description="Disordered" evidence="3">
    <location>
        <begin position="773"/>
        <end position="919"/>
    </location>
</feature>
<feature type="region of interest" description="Disordered" evidence="3">
    <location>
        <begin position="936"/>
        <end position="979"/>
    </location>
</feature>
<feature type="region of interest" description="Disordered" evidence="3">
    <location>
        <begin position="1175"/>
        <end position="1207"/>
    </location>
</feature>
<feature type="compositionally biased region" description="Acidic residues" evidence="3">
    <location>
        <begin position="151"/>
        <end position="169"/>
    </location>
</feature>
<feature type="compositionally biased region" description="Basic and acidic residues" evidence="3">
    <location>
        <begin position="465"/>
        <end position="496"/>
    </location>
</feature>
<feature type="compositionally biased region" description="Basic and acidic residues" evidence="3">
    <location>
        <begin position="531"/>
        <end position="540"/>
    </location>
</feature>
<feature type="compositionally biased region" description="Polar residues" evidence="3">
    <location>
        <begin position="542"/>
        <end position="551"/>
    </location>
</feature>
<feature type="compositionally biased region" description="Basic and acidic residues" evidence="3">
    <location>
        <begin position="619"/>
        <end position="629"/>
    </location>
</feature>
<feature type="compositionally biased region" description="Basic and acidic residues" evidence="3">
    <location>
        <begin position="641"/>
        <end position="665"/>
    </location>
</feature>
<feature type="compositionally biased region" description="Low complexity" evidence="3">
    <location>
        <begin position="742"/>
        <end position="757"/>
    </location>
</feature>
<feature type="compositionally biased region" description="Basic and acidic residues" evidence="3">
    <location>
        <begin position="773"/>
        <end position="786"/>
    </location>
</feature>
<feature type="compositionally biased region" description="Low complexity" evidence="3">
    <location>
        <begin position="818"/>
        <end position="853"/>
    </location>
</feature>
<feature type="compositionally biased region" description="Low complexity" evidence="3">
    <location>
        <begin position="877"/>
        <end position="890"/>
    </location>
</feature>
<feature type="compositionally biased region" description="Pro residues" evidence="3">
    <location>
        <begin position="891"/>
        <end position="908"/>
    </location>
</feature>
<feature type="compositionally biased region" description="Low complexity" evidence="3">
    <location>
        <begin position="909"/>
        <end position="919"/>
    </location>
</feature>
<feature type="compositionally biased region" description="Low complexity" evidence="3">
    <location>
        <begin position="936"/>
        <end position="952"/>
    </location>
</feature>
<feature type="compositionally biased region" description="Low complexity" evidence="3">
    <location>
        <begin position="1183"/>
        <end position="1192"/>
    </location>
</feature>
<proteinExistence type="inferred from homology"/>
<organism>
    <name type="scientific">Mycosarcoma maydis</name>
    <name type="common">Corn smut fungus</name>
    <name type="synonym">Ustilago maydis</name>
    <dbReference type="NCBI Taxonomy" id="5270"/>
    <lineage>
        <taxon>Eukaryota</taxon>
        <taxon>Fungi</taxon>
        <taxon>Dikarya</taxon>
        <taxon>Basidiomycota</taxon>
        <taxon>Ustilaginomycotina</taxon>
        <taxon>Ustilaginomycetes</taxon>
        <taxon>Ustilaginales</taxon>
        <taxon>Ustilaginaceae</taxon>
        <taxon>Mycosarcoma</taxon>
    </lineage>
</organism>
<comment type="function">
    <text evidence="1">Component of the PAN1 actin cytoskeleton-regulatory complex required for the internalization of endosomes during actin-coupled endocytosis. The complex links the site of endocytosis to the cell membrane-associated actin cytoskeleton. Mediates uptake of external molecules and vacuolar degradation of plasma membrane proteins. Plays a role in the proper organization of the cell membrane-associated actin cytoskeleton and promotes its destabilization (By similarity).</text>
</comment>
<comment type="subunit">
    <text evidence="1">Component of the PAN1 actin cytoskeleton-regulatory complex.</text>
</comment>
<comment type="subcellular location">
    <subcellularLocation>
        <location evidence="1">Cell membrane</location>
        <topology evidence="1">Peripheral membrane protein</topology>
        <orientation evidence="1">Cytoplasmic side</orientation>
    </subcellularLocation>
    <subcellularLocation>
        <location evidence="1">Endosome membrane</location>
        <topology evidence="1">Peripheral membrane protein</topology>
        <orientation evidence="1">Cytoplasmic side</orientation>
    </subcellularLocation>
    <subcellularLocation>
        <location evidence="1">Cytoplasm</location>
        <location evidence="1">Cytoskeleton</location>
        <location evidence="1">Actin patch</location>
    </subcellularLocation>
    <text evidence="1">Cytoplasmic and cortical actin patches.</text>
</comment>
<comment type="similarity">
    <text evidence="4">Belongs to the SLA1 family.</text>
</comment>
<reference key="1">
    <citation type="journal article" date="2006" name="Nature">
        <title>Insights from the genome of the biotrophic fungal plant pathogen Ustilago maydis.</title>
        <authorList>
            <person name="Kaemper J."/>
            <person name="Kahmann R."/>
            <person name="Boelker M."/>
            <person name="Ma L.-J."/>
            <person name="Brefort T."/>
            <person name="Saville B.J."/>
            <person name="Banuett F."/>
            <person name="Kronstad J.W."/>
            <person name="Gold S.E."/>
            <person name="Mueller O."/>
            <person name="Perlin M.H."/>
            <person name="Woesten H.A.B."/>
            <person name="de Vries R."/>
            <person name="Ruiz-Herrera J."/>
            <person name="Reynaga-Pena C.G."/>
            <person name="Snetselaar K."/>
            <person name="McCann M."/>
            <person name="Perez-Martin J."/>
            <person name="Feldbruegge M."/>
            <person name="Basse C.W."/>
            <person name="Steinberg G."/>
            <person name="Ibeas J.I."/>
            <person name="Holloman W."/>
            <person name="Guzman P."/>
            <person name="Farman M.L."/>
            <person name="Stajich J.E."/>
            <person name="Sentandreu R."/>
            <person name="Gonzalez-Prieto J.M."/>
            <person name="Kennell J.C."/>
            <person name="Molina L."/>
            <person name="Schirawski J."/>
            <person name="Mendoza-Mendoza A."/>
            <person name="Greilinger D."/>
            <person name="Muench K."/>
            <person name="Roessel N."/>
            <person name="Scherer M."/>
            <person name="Vranes M."/>
            <person name="Ladendorf O."/>
            <person name="Vincon V."/>
            <person name="Fuchs U."/>
            <person name="Sandrock B."/>
            <person name="Meng S."/>
            <person name="Ho E.C.H."/>
            <person name="Cahill M.J."/>
            <person name="Boyce K.J."/>
            <person name="Klose J."/>
            <person name="Klosterman S.J."/>
            <person name="Deelstra H.J."/>
            <person name="Ortiz-Castellanos L."/>
            <person name="Li W."/>
            <person name="Sanchez-Alonso P."/>
            <person name="Schreier P.H."/>
            <person name="Haeuser-Hahn I."/>
            <person name="Vaupel M."/>
            <person name="Koopmann E."/>
            <person name="Friedrich G."/>
            <person name="Voss H."/>
            <person name="Schlueter T."/>
            <person name="Margolis J."/>
            <person name="Platt D."/>
            <person name="Swimmer C."/>
            <person name="Gnirke A."/>
            <person name="Chen F."/>
            <person name="Vysotskaia V."/>
            <person name="Mannhaupt G."/>
            <person name="Gueldener U."/>
            <person name="Muensterkoetter M."/>
            <person name="Haase D."/>
            <person name="Oesterheld M."/>
            <person name="Mewes H.-W."/>
            <person name="Mauceli E.W."/>
            <person name="DeCaprio D."/>
            <person name="Wade C.M."/>
            <person name="Butler J."/>
            <person name="Young S.K."/>
            <person name="Jaffe D.B."/>
            <person name="Calvo S.E."/>
            <person name="Nusbaum C."/>
            <person name="Galagan J.E."/>
            <person name="Birren B.W."/>
        </authorList>
    </citation>
    <scope>NUCLEOTIDE SEQUENCE [LARGE SCALE GENOMIC DNA]</scope>
    <source>
        <strain>DSM 14603 / FGSC 9021 / UM521</strain>
    </source>
</reference>
<reference key="2">
    <citation type="submission" date="2014-09" db="EMBL/GenBank/DDBJ databases">
        <authorList>
            <person name="Gueldener U."/>
            <person name="Muensterkoetter M."/>
            <person name="Walter M.C."/>
            <person name="Mannhaupt G."/>
            <person name="Kahmann R."/>
        </authorList>
    </citation>
    <scope>GENOME REANNOTATION</scope>
    <source>
        <strain>DSM 14603 / FGSC 9021 / UM521</strain>
    </source>
</reference>
<keyword id="KW-0009">Actin-binding</keyword>
<keyword id="KW-1003">Cell membrane</keyword>
<keyword id="KW-0963">Cytoplasm</keyword>
<keyword id="KW-0206">Cytoskeleton</keyword>
<keyword id="KW-0254">Endocytosis</keyword>
<keyword id="KW-0967">Endosome</keyword>
<keyword id="KW-0472">Membrane</keyword>
<keyword id="KW-1185">Reference proteome</keyword>
<keyword id="KW-0677">Repeat</keyword>
<keyword id="KW-0728">SH3 domain</keyword>
<dbReference type="EMBL" id="CM003158">
    <property type="protein sequence ID" value="KIS66336.1"/>
    <property type="molecule type" value="Genomic_DNA"/>
</dbReference>
<dbReference type="RefSeq" id="XP_011392040.1">
    <property type="nucleotide sequence ID" value="XM_011393738.1"/>
</dbReference>
<dbReference type="SMR" id="Q4P3H6"/>
<dbReference type="FunCoup" id="Q4P3H6">
    <property type="interactions" value="167"/>
</dbReference>
<dbReference type="STRING" id="237631.Q4P3H6"/>
<dbReference type="EnsemblFungi" id="KIS66336">
    <property type="protein sequence ID" value="KIS66336"/>
    <property type="gene ID" value="UMAG_05337"/>
</dbReference>
<dbReference type="GeneID" id="23565255"/>
<dbReference type="KEGG" id="uma:UMAG_05337"/>
<dbReference type="VEuPathDB" id="FungiDB:UMAG_05337"/>
<dbReference type="eggNOG" id="ENOG502QQC3">
    <property type="taxonomic scope" value="Eukaryota"/>
</dbReference>
<dbReference type="HOGENOM" id="CLU_006319_0_0_1"/>
<dbReference type="InParanoid" id="Q4P3H6"/>
<dbReference type="OMA" id="FMAQGED"/>
<dbReference type="OrthoDB" id="5971719at2759"/>
<dbReference type="Proteomes" id="UP000000561">
    <property type="component" value="Chromosome 19"/>
</dbReference>
<dbReference type="GO" id="GO:0030479">
    <property type="term" value="C:actin cortical patch"/>
    <property type="evidence" value="ECO:0007669"/>
    <property type="project" value="UniProtKB-SubCell"/>
</dbReference>
<dbReference type="GO" id="GO:0010008">
    <property type="term" value="C:endosome membrane"/>
    <property type="evidence" value="ECO:0007669"/>
    <property type="project" value="UniProtKB-SubCell"/>
</dbReference>
<dbReference type="GO" id="GO:0005634">
    <property type="term" value="C:nucleus"/>
    <property type="evidence" value="ECO:0000318"/>
    <property type="project" value="GO_Central"/>
</dbReference>
<dbReference type="GO" id="GO:0005886">
    <property type="term" value="C:plasma membrane"/>
    <property type="evidence" value="ECO:0007669"/>
    <property type="project" value="UniProtKB-SubCell"/>
</dbReference>
<dbReference type="GO" id="GO:0003779">
    <property type="term" value="F:actin binding"/>
    <property type="evidence" value="ECO:0007669"/>
    <property type="project" value="UniProtKB-KW"/>
</dbReference>
<dbReference type="GO" id="GO:0042802">
    <property type="term" value="F:identical protein binding"/>
    <property type="evidence" value="ECO:0007669"/>
    <property type="project" value="InterPro"/>
</dbReference>
<dbReference type="GO" id="GO:0030674">
    <property type="term" value="F:protein-macromolecule adaptor activity"/>
    <property type="evidence" value="ECO:0007669"/>
    <property type="project" value="InterPro"/>
</dbReference>
<dbReference type="GO" id="GO:0043130">
    <property type="term" value="F:ubiquitin binding"/>
    <property type="evidence" value="ECO:0007669"/>
    <property type="project" value="InterPro"/>
</dbReference>
<dbReference type="GO" id="GO:0000147">
    <property type="term" value="P:actin cortical patch assembly"/>
    <property type="evidence" value="ECO:0000318"/>
    <property type="project" value="GO_Central"/>
</dbReference>
<dbReference type="GO" id="GO:0006897">
    <property type="term" value="P:endocytosis"/>
    <property type="evidence" value="ECO:0007669"/>
    <property type="project" value="UniProtKB-KW"/>
</dbReference>
<dbReference type="GO" id="GO:0030833">
    <property type="term" value="P:regulation of actin filament polymerization"/>
    <property type="evidence" value="ECO:0000318"/>
    <property type="project" value="GO_Central"/>
</dbReference>
<dbReference type="CDD" id="cd09532">
    <property type="entry name" value="SAM_SLA1_fungal"/>
    <property type="match status" value="1"/>
</dbReference>
<dbReference type="CDD" id="cd11773">
    <property type="entry name" value="SH3_Sla1p_1"/>
    <property type="match status" value="1"/>
</dbReference>
<dbReference type="CDD" id="cd11775">
    <property type="entry name" value="SH3_Sla1p_3"/>
    <property type="match status" value="1"/>
</dbReference>
<dbReference type="Gene3D" id="2.30.30.40">
    <property type="entry name" value="SH3 Domains"/>
    <property type="match status" value="3"/>
</dbReference>
<dbReference type="Gene3D" id="2.30.30.700">
    <property type="entry name" value="SLA1 homology domain 1"/>
    <property type="match status" value="1"/>
</dbReference>
<dbReference type="Gene3D" id="1.10.150.50">
    <property type="entry name" value="Transcription Factor, Ets-1"/>
    <property type="match status" value="1"/>
</dbReference>
<dbReference type="InterPro" id="IPR013182">
    <property type="entry name" value="DUF1720"/>
</dbReference>
<dbReference type="InterPro" id="IPR056996">
    <property type="entry name" value="PH_SLA1"/>
</dbReference>
<dbReference type="InterPro" id="IPR013761">
    <property type="entry name" value="SAM/pointed_sf"/>
</dbReference>
<dbReference type="InterPro" id="IPR036028">
    <property type="entry name" value="SH3-like_dom_sf"/>
</dbReference>
<dbReference type="InterPro" id="IPR001452">
    <property type="entry name" value="SH3_domain"/>
</dbReference>
<dbReference type="InterPro" id="IPR007131">
    <property type="entry name" value="SHD1"/>
</dbReference>
<dbReference type="InterPro" id="IPR035800">
    <property type="entry name" value="Sla1_SH3_1"/>
</dbReference>
<dbReference type="InterPro" id="IPR035821">
    <property type="entry name" value="Sla1_SH3_3"/>
</dbReference>
<dbReference type="PANTHER" id="PTHR15735:SF19">
    <property type="entry name" value="ACTIN CYTOSKELETON-REGULATORY COMPLEX PROTEIN SLA1"/>
    <property type="match status" value="1"/>
</dbReference>
<dbReference type="PANTHER" id="PTHR15735">
    <property type="entry name" value="FCH AND DOUBLE SH3 DOMAINS PROTEIN"/>
    <property type="match status" value="1"/>
</dbReference>
<dbReference type="Pfam" id="PF08226">
    <property type="entry name" value="DUF1720"/>
    <property type="match status" value="1"/>
</dbReference>
<dbReference type="Pfam" id="PF24081">
    <property type="entry name" value="PH_SLA1"/>
    <property type="match status" value="1"/>
</dbReference>
<dbReference type="Pfam" id="PF18017">
    <property type="entry name" value="SAM_4"/>
    <property type="match status" value="1"/>
</dbReference>
<dbReference type="Pfam" id="PF00018">
    <property type="entry name" value="SH3_1"/>
    <property type="match status" value="2"/>
</dbReference>
<dbReference type="Pfam" id="PF14604">
    <property type="entry name" value="SH3_9"/>
    <property type="match status" value="1"/>
</dbReference>
<dbReference type="Pfam" id="PF03983">
    <property type="entry name" value="SHD1"/>
    <property type="match status" value="1"/>
</dbReference>
<dbReference type="PRINTS" id="PR00452">
    <property type="entry name" value="SH3DOMAIN"/>
</dbReference>
<dbReference type="SMART" id="SM00326">
    <property type="entry name" value="SH3"/>
    <property type="match status" value="3"/>
</dbReference>
<dbReference type="SUPFAM" id="SSF50044">
    <property type="entry name" value="SH3-domain"/>
    <property type="match status" value="3"/>
</dbReference>
<dbReference type="PROSITE" id="PS50002">
    <property type="entry name" value="SH3"/>
    <property type="match status" value="3"/>
</dbReference>
<name>SLA1_MYCMD</name>
<accession>Q4P3H6</accession>
<accession>A0A0D1DQT8</accession>
<protein>
    <recommendedName>
        <fullName>Actin cytoskeleton-regulatory complex protein SLA1</fullName>
    </recommendedName>
</protein>